<protein>
    <recommendedName>
        <fullName>Dystrotelin</fullName>
    </recommendedName>
</protein>
<accession>A2CJ06</accession>
<evidence type="ECO:0000250" key="1"/>
<evidence type="ECO:0000255" key="2"/>
<evidence type="ECO:0000255" key="3">
    <source>
        <dbReference type="PROSITE-ProRule" id="PRU00228"/>
    </source>
</evidence>
<evidence type="ECO:0000256" key="4">
    <source>
        <dbReference type="SAM" id="MobiDB-lite"/>
    </source>
</evidence>
<organism>
    <name type="scientific">Homo sapiens</name>
    <name type="common">Human</name>
    <dbReference type="NCBI Taxonomy" id="9606"/>
    <lineage>
        <taxon>Eukaryota</taxon>
        <taxon>Metazoa</taxon>
        <taxon>Chordata</taxon>
        <taxon>Craniata</taxon>
        <taxon>Vertebrata</taxon>
        <taxon>Euteleostomi</taxon>
        <taxon>Mammalia</taxon>
        <taxon>Eutheria</taxon>
        <taxon>Euarchontoglires</taxon>
        <taxon>Primates</taxon>
        <taxon>Haplorrhini</taxon>
        <taxon>Catarrhini</taxon>
        <taxon>Hominidae</taxon>
        <taxon>Homo</taxon>
    </lineage>
</organism>
<sequence length="578" mass="65320">MDPDKQDALNSIENSIYRTAFKLQSVQTLCQLDLIDSSLIQQVLLRPSFWEARKHSLSVQQLSQALQELFQKAREENPGQVHPRAPELTLSLLTTMYNSKGTGFLQLMPAAAALITLSGDSPLSKYRALFQLYAENSRGGYDSGPRMTRRVLRKLLTDLQQIPTFVGESRALCPVESATRSCFQGVLSPAIKEEKFLSWVQSEPPILLWLPTCHRLSAAERVTHPARCTLCRTFPITGLRYRCLKCLNFDICQMCFLSGLHSKSHQKSHPVIEHCIQMSAMQNTKLLFRTLRNNLLQGRCRKKEAARRQQLLDQVNPKGVPHHAQARLLKKQLNQYKDKLQAIYTSQEERICRFETRIHKLKTNQDSLWTKLQQIRRDLQARLQPPGPSSSSFQNVGNKVDHSSTEKVPKGGDYLQIKNATEDASTGEPLPKLDEVDRSHRSHTNAEHALRNPESPETTLHSTRAQSQTQKMPQKVISALPSYQEGLKQDIPKMVPAEMSSPALAAVEKKEAGNIKERKDELEEEELQELLSKLMDAFNLETPSGPESSVNMDLYSGAQRVCRAFSALVDQIALPNLK</sequence>
<comment type="subcellular location">
    <subcellularLocation>
        <location evidence="1">Cell membrane</location>
    </subcellularLocation>
</comment>
<gene>
    <name type="primary">DYTN</name>
</gene>
<proteinExistence type="evidence at transcript level"/>
<name>DYTN_HUMAN</name>
<keyword id="KW-1003">Cell membrane</keyword>
<keyword id="KW-0175">Coiled coil</keyword>
<keyword id="KW-0472">Membrane</keyword>
<keyword id="KW-0479">Metal-binding</keyword>
<keyword id="KW-1185">Reference proteome</keyword>
<keyword id="KW-0862">Zinc</keyword>
<keyword id="KW-0863">Zinc-finger</keyword>
<reference key="1">
    <citation type="journal article" date="2007" name="BMC Genomics">
        <title>The dystrotelin, dystrophin and dystrobrevin superfamily: new paralogues and old isoforms.</title>
        <authorList>
            <person name="Jin H."/>
            <person name="Tan S."/>
            <person name="Hermanowski J."/>
            <person name="Boehm S."/>
            <person name="Pacheco S."/>
            <person name="McCauley J.M."/>
            <person name="Greener M.J."/>
            <person name="Hinits Y."/>
            <person name="Hughes S.M."/>
            <person name="Sharpe P.T."/>
            <person name="Roberts R.G."/>
        </authorList>
    </citation>
    <scope>NUCLEOTIDE SEQUENCE [MRNA]</scope>
</reference>
<dbReference type="EMBL" id="DQ516347">
    <property type="protein sequence ID" value="ABF55377.1"/>
    <property type="molecule type" value="mRNA"/>
</dbReference>
<dbReference type="CCDS" id="CCDS46502.1"/>
<dbReference type="RefSeq" id="NP_001087199.1">
    <property type="nucleotide sequence ID" value="NM_001093730.1"/>
</dbReference>
<dbReference type="SMR" id="A2CJ06"/>
<dbReference type="BioGRID" id="133933">
    <property type="interactions" value="1"/>
</dbReference>
<dbReference type="FunCoup" id="A2CJ06">
    <property type="interactions" value="29"/>
</dbReference>
<dbReference type="STRING" id="9606.ENSP00000396593"/>
<dbReference type="iPTMnet" id="A2CJ06"/>
<dbReference type="PhosphoSitePlus" id="A2CJ06"/>
<dbReference type="SwissPalm" id="A2CJ06"/>
<dbReference type="BioMuta" id="DYTN"/>
<dbReference type="jPOST" id="A2CJ06"/>
<dbReference type="PaxDb" id="9606-ENSP00000396593"/>
<dbReference type="PeptideAtlas" id="A2CJ06"/>
<dbReference type="ProteomicsDB" id="437"/>
<dbReference type="Antibodypedia" id="67876">
    <property type="antibodies" value="66 antibodies from 12 providers"/>
</dbReference>
<dbReference type="DNASU" id="391475"/>
<dbReference type="Ensembl" id="ENST00000452335.2">
    <property type="protein sequence ID" value="ENSP00000396593.2"/>
    <property type="gene ID" value="ENSG00000232125.5"/>
</dbReference>
<dbReference type="GeneID" id="391475"/>
<dbReference type="KEGG" id="hsa:391475"/>
<dbReference type="MANE-Select" id="ENST00000452335.2">
    <property type="protein sequence ID" value="ENSP00000396593.2"/>
    <property type="RefSeq nucleotide sequence ID" value="NM_001093730.1"/>
    <property type="RefSeq protein sequence ID" value="NP_001087199.1"/>
</dbReference>
<dbReference type="UCSC" id="uc002vbr.1">
    <property type="organism name" value="human"/>
</dbReference>
<dbReference type="AGR" id="HGNC:23279"/>
<dbReference type="CTD" id="391475"/>
<dbReference type="GeneCards" id="DYTN"/>
<dbReference type="HGNC" id="HGNC:23279">
    <property type="gene designation" value="DYTN"/>
</dbReference>
<dbReference type="HPA" id="ENSG00000232125">
    <property type="expression patterns" value="Not detected"/>
</dbReference>
<dbReference type="MIM" id="618510">
    <property type="type" value="gene"/>
</dbReference>
<dbReference type="neXtProt" id="NX_A2CJ06"/>
<dbReference type="OpenTargets" id="ENSG00000232125"/>
<dbReference type="PharmGKB" id="PA162384136"/>
<dbReference type="VEuPathDB" id="HostDB:ENSG00000232125"/>
<dbReference type="eggNOG" id="KOG4286">
    <property type="taxonomic scope" value="Eukaryota"/>
</dbReference>
<dbReference type="GeneTree" id="ENSGT00940000162403"/>
<dbReference type="HOGENOM" id="CLU_027773_0_0_1"/>
<dbReference type="InParanoid" id="A2CJ06"/>
<dbReference type="OMA" id="FLSWVQS"/>
<dbReference type="OrthoDB" id="10014385at2759"/>
<dbReference type="PAN-GO" id="A2CJ06">
    <property type="GO annotations" value="2 GO annotations based on evolutionary models"/>
</dbReference>
<dbReference type="PhylomeDB" id="A2CJ06"/>
<dbReference type="TreeFam" id="TF326090"/>
<dbReference type="PathwayCommons" id="A2CJ06"/>
<dbReference type="SignaLink" id="A2CJ06"/>
<dbReference type="BioGRID-ORCS" id="391475">
    <property type="hits" value="11 hits in 1139 CRISPR screens"/>
</dbReference>
<dbReference type="ChiTaRS" id="DYTN">
    <property type="organism name" value="human"/>
</dbReference>
<dbReference type="GenomeRNAi" id="391475"/>
<dbReference type="Pharos" id="A2CJ06">
    <property type="development level" value="Tdark"/>
</dbReference>
<dbReference type="PRO" id="PR:A2CJ06"/>
<dbReference type="Proteomes" id="UP000005640">
    <property type="component" value="Chromosome 2"/>
</dbReference>
<dbReference type="RNAct" id="A2CJ06">
    <property type="molecule type" value="protein"/>
</dbReference>
<dbReference type="Bgee" id="ENSG00000232125">
    <property type="expression patterns" value="Expressed in primordial germ cell in gonad and 10 other cell types or tissues"/>
</dbReference>
<dbReference type="ExpressionAtlas" id="A2CJ06">
    <property type="expression patterns" value="baseline and differential"/>
</dbReference>
<dbReference type="GO" id="GO:0005886">
    <property type="term" value="C:plasma membrane"/>
    <property type="evidence" value="ECO:0000318"/>
    <property type="project" value="GO_Central"/>
</dbReference>
<dbReference type="GO" id="GO:0045202">
    <property type="term" value="C:synapse"/>
    <property type="evidence" value="ECO:0007669"/>
    <property type="project" value="GOC"/>
</dbReference>
<dbReference type="GO" id="GO:0008270">
    <property type="term" value="F:zinc ion binding"/>
    <property type="evidence" value="ECO:0007669"/>
    <property type="project" value="UniProtKB-KW"/>
</dbReference>
<dbReference type="GO" id="GO:0099536">
    <property type="term" value="P:synaptic signaling"/>
    <property type="evidence" value="ECO:0000318"/>
    <property type="project" value="GO_Central"/>
</dbReference>
<dbReference type="CDD" id="cd16243">
    <property type="entry name" value="EFh_DYTN"/>
    <property type="match status" value="1"/>
</dbReference>
<dbReference type="CDD" id="cd02334">
    <property type="entry name" value="ZZ_dystrophin"/>
    <property type="match status" value="1"/>
</dbReference>
<dbReference type="Gene3D" id="3.30.60.90">
    <property type="match status" value="1"/>
</dbReference>
<dbReference type="Gene3D" id="1.10.238.10">
    <property type="entry name" value="EF-hand"/>
    <property type="match status" value="2"/>
</dbReference>
<dbReference type="InterPro" id="IPR011992">
    <property type="entry name" value="EF-hand-dom_pair"/>
</dbReference>
<dbReference type="InterPro" id="IPR015153">
    <property type="entry name" value="EF-hand_dom_typ1"/>
</dbReference>
<dbReference type="InterPro" id="IPR015154">
    <property type="entry name" value="EF-hand_dom_typ2"/>
</dbReference>
<dbReference type="InterPro" id="IPR050774">
    <property type="entry name" value="KCMF1/Dystrophin"/>
</dbReference>
<dbReference type="InterPro" id="IPR000433">
    <property type="entry name" value="Znf_ZZ"/>
</dbReference>
<dbReference type="InterPro" id="IPR043145">
    <property type="entry name" value="Znf_ZZ_sf"/>
</dbReference>
<dbReference type="PANTHER" id="PTHR12268:SF18">
    <property type="entry name" value="DYSTROTELIN"/>
    <property type="match status" value="1"/>
</dbReference>
<dbReference type="PANTHER" id="PTHR12268">
    <property type="entry name" value="E3 UBIQUITIN-PROTEIN LIGASE KCMF1"/>
    <property type="match status" value="1"/>
</dbReference>
<dbReference type="Pfam" id="PF09068">
    <property type="entry name" value="EF-hand_2"/>
    <property type="match status" value="1"/>
</dbReference>
<dbReference type="Pfam" id="PF09069">
    <property type="entry name" value="EF-hand_3"/>
    <property type="match status" value="1"/>
</dbReference>
<dbReference type="Pfam" id="PF00569">
    <property type="entry name" value="ZZ"/>
    <property type="match status" value="1"/>
</dbReference>
<dbReference type="SMART" id="SM00291">
    <property type="entry name" value="ZnF_ZZ"/>
    <property type="match status" value="1"/>
</dbReference>
<dbReference type="SUPFAM" id="SSF47473">
    <property type="entry name" value="EF-hand"/>
    <property type="match status" value="2"/>
</dbReference>
<dbReference type="SUPFAM" id="SSF57850">
    <property type="entry name" value="RING/U-box"/>
    <property type="match status" value="1"/>
</dbReference>
<dbReference type="PROSITE" id="PS01357">
    <property type="entry name" value="ZF_ZZ_1"/>
    <property type="match status" value="1"/>
</dbReference>
<dbReference type="PROSITE" id="PS50135">
    <property type="entry name" value="ZF_ZZ_2"/>
    <property type="match status" value="1"/>
</dbReference>
<feature type="chain" id="PRO_0000298934" description="Dystrotelin">
    <location>
        <begin position="1"/>
        <end position="578"/>
    </location>
</feature>
<feature type="zinc finger region" description="ZZ-type" evidence="3">
    <location>
        <begin position="223"/>
        <end position="279"/>
    </location>
</feature>
<feature type="region of interest" description="Disordered" evidence="4">
    <location>
        <begin position="382"/>
        <end position="475"/>
    </location>
</feature>
<feature type="coiled-coil region" evidence="2">
    <location>
        <begin position="322"/>
        <end position="351"/>
    </location>
</feature>
<feature type="coiled-coil region" evidence="2">
    <location>
        <begin position="503"/>
        <end position="537"/>
    </location>
</feature>
<feature type="compositionally biased region" description="Basic and acidic residues" evidence="4">
    <location>
        <begin position="399"/>
        <end position="410"/>
    </location>
</feature>
<feature type="compositionally biased region" description="Basic and acidic residues" evidence="4">
    <location>
        <begin position="431"/>
        <end position="451"/>
    </location>
</feature>
<feature type="compositionally biased region" description="Polar residues" evidence="4">
    <location>
        <begin position="455"/>
        <end position="472"/>
    </location>
</feature>
<feature type="binding site" evidence="3">
    <location>
        <position position="228"/>
    </location>
    <ligand>
        <name>Zn(2+)</name>
        <dbReference type="ChEBI" id="CHEBI:29105"/>
        <label>1</label>
    </ligand>
</feature>
<feature type="binding site" evidence="3">
    <location>
        <position position="231"/>
    </location>
    <ligand>
        <name>Zn(2+)</name>
        <dbReference type="ChEBI" id="CHEBI:29105"/>
        <label>1</label>
    </ligand>
</feature>
<feature type="binding site" evidence="3">
    <location>
        <position position="243"/>
    </location>
    <ligand>
        <name>Zn(2+)</name>
        <dbReference type="ChEBI" id="CHEBI:29105"/>
        <label>2</label>
    </ligand>
</feature>
<feature type="binding site" evidence="3">
    <location>
        <position position="246"/>
    </location>
    <ligand>
        <name>Zn(2+)</name>
        <dbReference type="ChEBI" id="CHEBI:29105"/>
        <label>2</label>
    </ligand>
</feature>
<feature type="binding site" evidence="3">
    <location>
        <position position="252"/>
    </location>
    <ligand>
        <name>Zn(2+)</name>
        <dbReference type="ChEBI" id="CHEBI:29105"/>
        <label>1</label>
    </ligand>
</feature>
<feature type="binding site" evidence="3">
    <location>
        <position position="255"/>
    </location>
    <ligand>
        <name>Zn(2+)</name>
        <dbReference type="ChEBI" id="CHEBI:29105"/>
        <label>1</label>
    </ligand>
</feature>
<feature type="binding site" evidence="3">
    <location>
        <position position="265"/>
    </location>
    <ligand>
        <name>Zn(2+)</name>
        <dbReference type="ChEBI" id="CHEBI:29105"/>
        <label>2</label>
    </ligand>
</feature>
<feature type="binding site" evidence="3">
    <location>
        <position position="269"/>
    </location>
    <ligand>
        <name>Zn(2+)</name>
        <dbReference type="ChEBI" id="CHEBI:29105"/>
        <label>2</label>
    </ligand>
</feature>
<feature type="sequence variant" id="VAR_050960" description="In dbSNP:rs16838593.">
    <original>Y</original>
    <variation>C</variation>
    <location>
        <position position="241"/>
    </location>
</feature>
<feature type="sequence variant" id="VAR_050961" description="In dbSNP:rs2115591.">
    <original>Q</original>
    <variation>K</variation>
    <location>
        <position position="474"/>
    </location>
</feature>